<protein>
    <recommendedName>
        <fullName evidence="1">Ribosomal RNA small subunit methyltransferase J</fullName>
        <ecNumber evidence="1">2.1.1.242</ecNumber>
    </recommendedName>
    <alternativeName>
        <fullName evidence="1">16S rRNA m2G1516 methyltransferase</fullName>
    </alternativeName>
    <alternativeName>
        <fullName evidence="1">rRNA (guanine-N(2)-)-methyltransferase</fullName>
    </alternativeName>
</protein>
<sequence length="250" mass="26949">MKICLIDETGTGDGALSVLAARWGLEHDEDNLMALVLTPEHLELRKRDEPKLGGIFVDFVGGAMAHRRKFGGGRGEAVAKAVGIKGDYLPDVVDATAGLGRDAFVLASVGCRVRMLERNPVVAALLDDGLARGYADAEIGGWLQERLQLIHASSLTALTDITPRPQVVYLDPMFPHKQKSALVKKEMRVFQSLVGPDLDADGLLEPARLLATKRVVVKRPDYAPPLANVATPNAVVTKGHRFDIYAGTPV</sequence>
<reference key="1">
    <citation type="journal article" date="2008" name="J. Bacteriol.">
        <title>The pangenome structure of Escherichia coli: comparative genomic analysis of E. coli commensal and pathogenic isolates.</title>
        <authorList>
            <person name="Rasko D.A."/>
            <person name="Rosovitz M.J."/>
            <person name="Myers G.S.A."/>
            <person name="Mongodin E.F."/>
            <person name="Fricke W.F."/>
            <person name="Gajer P."/>
            <person name="Crabtree J."/>
            <person name="Sebaihia M."/>
            <person name="Thomson N.R."/>
            <person name="Chaudhuri R."/>
            <person name="Henderson I.R."/>
            <person name="Sperandio V."/>
            <person name="Ravel J."/>
        </authorList>
    </citation>
    <scope>NUCLEOTIDE SEQUENCE [LARGE SCALE GENOMIC DNA]</scope>
    <source>
        <strain>HS</strain>
    </source>
</reference>
<feature type="chain" id="PRO_0000316254" description="Ribosomal RNA small subunit methyltransferase J">
    <location>
        <begin position="1"/>
        <end position="250"/>
    </location>
</feature>
<feature type="binding site" evidence="1">
    <location>
        <begin position="101"/>
        <end position="102"/>
    </location>
    <ligand>
        <name>S-adenosyl-L-methionine</name>
        <dbReference type="ChEBI" id="CHEBI:59789"/>
    </ligand>
</feature>
<feature type="binding site" evidence="1">
    <location>
        <begin position="117"/>
        <end position="118"/>
    </location>
    <ligand>
        <name>S-adenosyl-L-methionine</name>
        <dbReference type="ChEBI" id="CHEBI:59789"/>
    </ligand>
</feature>
<feature type="binding site" evidence="1">
    <location>
        <begin position="153"/>
        <end position="154"/>
    </location>
    <ligand>
        <name>S-adenosyl-L-methionine</name>
        <dbReference type="ChEBI" id="CHEBI:59789"/>
    </ligand>
</feature>
<feature type="binding site" evidence="1">
    <location>
        <position position="171"/>
    </location>
    <ligand>
        <name>S-adenosyl-L-methionine</name>
        <dbReference type="ChEBI" id="CHEBI:59789"/>
    </ligand>
</feature>
<evidence type="ECO:0000255" key="1">
    <source>
        <dbReference type="HAMAP-Rule" id="MF_01523"/>
    </source>
</evidence>
<dbReference type="EC" id="2.1.1.242" evidence="1"/>
<dbReference type="EMBL" id="CP000802">
    <property type="protein sequence ID" value="ABV07908.1"/>
    <property type="molecule type" value="Genomic_DNA"/>
</dbReference>
<dbReference type="RefSeq" id="WP_000686620.1">
    <property type="nucleotide sequence ID" value="NC_009800.1"/>
</dbReference>
<dbReference type="SMR" id="A8A5V4"/>
<dbReference type="KEGG" id="ecx:EcHS_A3697"/>
<dbReference type="HOGENOM" id="CLU_076324_0_0_6"/>
<dbReference type="GO" id="GO:0005737">
    <property type="term" value="C:cytoplasm"/>
    <property type="evidence" value="ECO:0007669"/>
    <property type="project" value="UniProtKB-SubCell"/>
</dbReference>
<dbReference type="GO" id="GO:0008990">
    <property type="term" value="F:rRNA (guanine-N2-)-methyltransferase activity"/>
    <property type="evidence" value="ECO:0007669"/>
    <property type="project" value="UniProtKB-UniRule"/>
</dbReference>
<dbReference type="CDD" id="cd02440">
    <property type="entry name" value="AdoMet_MTases"/>
    <property type="match status" value="1"/>
</dbReference>
<dbReference type="FunFam" id="3.40.1630.10:FF:000001">
    <property type="entry name" value="Ribosomal RNA small subunit methyltransferase J"/>
    <property type="match status" value="1"/>
</dbReference>
<dbReference type="FunFam" id="3.40.50.150:FF:000072">
    <property type="entry name" value="Ribosomal RNA small subunit methyltransferase J"/>
    <property type="match status" value="1"/>
</dbReference>
<dbReference type="Gene3D" id="3.40.50.150">
    <property type="entry name" value="Vaccinia Virus protein VP39"/>
    <property type="match status" value="1"/>
</dbReference>
<dbReference type="Gene3D" id="3.40.1630.10">
    <property type="entry name" value="YhiQ-like domain"/>
    <property type="match status" value="1"/>
</dbReference>
<dbReference type="HAMAP" id="MF_01523">
    <property type="entry name" value="16SrRNA_methyltr_J"/>
    <property type="match status" value="1"/>
</dbReference>
<dbReference type="InterPro" id="IPR007536">
    <property type="entry name" value="16SrRNA_methylTrfase_J"/>
</dbReference>
<dbReference type="InterPro" id="IPR029063">
    <property type="entry name" value="SAM-dependent_MTases_sf"/>
</dbReference>
<dbReference type="NCBIfam" id="NF008012">
    <property type="entry name" value="PRK10742.1"/>
    <property type="match status" value="1"/>
</dbReference>
<dbReference type="PANTHER" id="PTHR36112">
    <property type="entry name" value="RIBOSOMAL RNA SMALL SUBUNIT METHYLTRANSFERASE J"/>
    <property type="match status" value="1"/>
</dbReference>
<dbReference type="PANTHER" id="PTHR36112:SF1">
    <property type="entry name" value="RIBOSOMAL RNA SMALL SUBUNIT METHYLTRANSFERASE J"/>
    <property type="match status" value="1"/>
</dbReference>
<dbReference type="Pfam" id="PF04445">
    <property type="entry name" value="SAM_MT"/>
    <property type="match status" value="1"/>
</dbReference>
<dbReference type="SUPFAM" id="SSF53335">
    <property type="entry name" value="S-adenosyl-L-methionine-dependent methyltransferases"/>
    <property type="match status" value="1"/>
</dbReference>
<proteinExistence type="inferred from homology"/>
<gene>
    <name evidence="1" type="primary">rsmJ</name>
    <name type="synonym">yhiQ</name>
    <name type="ordered locus">EcHS_A3697</name>
</gene>
<keyword id="KW-0963">Cytoplasm</keyword>
<keyword id="KW-0489">Methyltransferase</keyword>
<keyword id="KW-0698">rRNA processing</keyword>
<keyword id="KW-0949">S-adenosyl-L-methionine</keyword>
<keyword id="KW-0808">Transferase</keyword>
<comment type="function">
    <text evidence="1">Specifically methylates the guanosine in position 1516 of 16S rRNA.</text>
</comment>
<comment type="catalytic activity">
    <reaction evidence="1">
        <text>guanosine(1516) in 16S rRNA + S-adenosyl-L-methionine = N(2)-methylguanosine(1516) in 16S rRNA + S-adenosyl-L-homocysteine + H(+)</text>
        <dbReference type="Rhea" id="RHEA:43220"/>
        <dbReference type="Rhea" id="RHEA-COMP:10412"/>
        <dbReference type="Rhea" id="RHEA-COMP:10413"/>
        <dbReference type="ChEBI" id="CHEBI:15378"/>
        <dbReference type="ChEBI" id="CHEBI:57856"/>
        <dbReference type="ChEBI" id="CHEBI:59789"/>
        <dbReference type="ChEBI" id="CHEBI:74269"/>
        <dbReference type="ChEBI" id="CHEBI:74481"/>
        <dbReference type="EC" id="2.1.1.242"/>
    </reaction>
</comment>
<comment type="subcellular location">
    <subcellularLocation>
        <location evidence="1">Cytoplasm</location>
    </subcellularLocation>
</comment>
<comment type="similarity">
    <text evidence="1">Belongs to the methyltransferase superfamily. RsmJ family.</text>
</comment>
<accession>A8A5V4</accession>
<organism>
    <name type="scientific">Escherichia coli O9:H4 (strain HS)</name>
    <dbReference type="NCBI Taxonomy" id="331112"/>
    <lineage>
        <taxon>Bacteria</taxon>
        <taxon>Pseudomonadati</taxon>
        <taxon>Pseudomonadota</taxon>
        <taxon>Gammaproteobacteria</taxon>
        <taxon>Enterobacterales</taxon>
        <taxon>Enterobacteriaceae</taxon>
        <taxon>Escherichia</taxon>
    </lineage>
</organism>
<name>RSMJ_ECOHS</name>